<protein>
    <recommendedName>
        <fullName evidence="4">Pyrokinin-1</fullName>
        <shortName evidence="4">PK-1</shortName>
    </recommendedName>
    <alternativeName>
        <fullName evidence="1">YXPRL-amide</fullName>
    </alternativeName>
</protein>
<organism>
    <name type="scientific">Austrophasma gansbaaiense</name>
    <name type="common">Gladiator</name>
    <name type="synonym">Heel-walker</name>
    <dbReference type="NCBI Taxonomy" id="253136"/>
    <lineage>
        <taxon>Eukaryota</taxon>
        <taxon>Metazoa</taxon>
        <taxon>Ecdysozoa</taxon>
        <taxon>Arthropoda</taxon>
        <taxon>Hexapoda</taxon>
        <taxon>Insecta</taxon>
        <taxon>Pterygota</taxon>
        <taxon>Neoptera</taxon>
        <taxon>Polyneoptera</taxon>
        <taxon>Mantophasmatodea</taxon>
        <taxon>Austrophasmatidae</taxon>
        <taxon>Austrophasma</taxon>
    </lineage>
</organism>
<comment type="function">
    <text evidence="1">Myoactive.</text>
</comment>
<comment type="subcellular location">
    <subcellularLocation>
        <location evidence="6">Secreted</location>
    </subcellularLocation>
</comment>
<comment type="similarity">
    <text evidence="2">Belongs to the pyrokinin family.</text>
</comment>
<sequence>DGYTPRL</sequence>
<name>PPK1_AUSGA</name>
<dbReference type="GO" id="GO:0005576">
    <property type="term" value="C:extracellular region"/>
    <property type="evidence" value="ECO:0007669"/>
    <property type="project" value="UniProtKB-SubCell"/>
</dbReference>
<dbReference type="GO" id="GO:0007218">
    <property type="term" value="P:neuropeptide signaling pathway"/>
    <property type="evidence" value="ECO:0007669"/>
    <property type="project" value="UniProtKB-KW"/>
</dbReference>
<proteinExistence type="evidence at protein level"/>
<feature type="peptide" id="PRO_0000421574" description="Pyrokinin-1" evidence="3">
    <location>
        <begin position="1"/>
        <end position="7"/>
    </location>
</feature>
<feature type="modified residue" description="Leucine amide" evidence="3">
    <location>
        <position position="7"/>
    </location>
</feature>
<evidence type="ECO:0000250" key="1">
    <source>
        <dbReference type="UniProtKB" id="P82619"/>
    </source>
</evidence>
<evidence type="ECO:0000255" key="2"/>
<evidence type="ECO:0000269" key="3">
    <source>
    </source>
</evidence>
<evidence type="ECO:0000303" key="4">
    <source>
    </source>
</evidence>
<evidence type="ECO:0000305" key="5"/>
<evidence type="ECO:0000305" key="6">
    <source>
    </source>
</evidence>
<reference evidence="5" key="1">
    <citation type="journal article" date="2012" name="Syst. Biol.">
        <title>Peptidomics-based phylogeny and biogeography of Mantophasmatodea (Hexapoda).</title>
        <authorList>
            <person name="Predel R."/>
            <person name="Neupert S."/>
            <person name="Huetteroth W."/>
            <person name="Kahnt J."/>
            <person name="Waidelich D."/>
            <person name="Roth S."/>
        </authorList>
    </citation>
    <scope>PROTEIN SEQUENCE</scope>
    <scope>AMIDATION AT LEU-7</scope>
    <source>
        <tissue evidence="3">Corpora cardiaca</tissue>
    </source>
</reference>
<accession>B3A0E9</accession>
<keyword id="KW-0027">Amidation</keyword>
<keyword id="KW-0903">Direct protein sequencing</keyword>
<keyword id="KW-0527">Neuropeptide</keyword>
<keyword id="KW-0964">Secreted</keyword>